<comment type="subcellular location">
    <subcellularLocation>
        <location evidence="3">Membrane</location>
        <topology evidence="3">Multi-pass membrane protein</topology>
    </subcellularLocation>
</comment>
<comment type="tissue specificity">
    <text evidence="2">Expressed in the root-hair differentiation zone.</text>
</comment>
<comment type="similarity">
    <text evidence="3">Belongs to the major facilitator superfamily. Organophosphate:Pi antiporter (OPA) (TC 2.A.1.4) family.</text>
</comment>
<dbReference type="EMBL" id="AL035396">
    <property type="protein sequence ID" value="CAA23063.1"/>
    <property type="molecule type" value="Genomic_DNA"/>
</dbReference>
<dbReference type="EMBL" id="AL161562">
    <property type="protein sequence ID" value="CAB79431.1"/>
    <property type="molecule type" value="Genomic_DNA"/>
</dbReference>
<dbReference type="EMBL" id="CP002687">
    <property type="protein sequence ID" value="AEE85026.1"/>
    <property type="molecule type" value="Genomic_DNA"/>
</dbReference>
<dbReference type="EMBL" id="BX828025">
    <property type="status" value="NOT_ANNOTATED_CDS"/>
    <property type="molecule type" value="mRNA"/>
</dbReference>
<dbReference type="PIR" id="T05543">
    <property type="entry name" value="T05543"/>
</dbReference>
<dbReference type="RefSeq" id="NP_194252.1">
    <property type="nucleotide sequence ID" value="NM_118654.4"/>
</dbReference>
<dbReference type="SMR" id="Q9SB41"/>
<dbReference type="FunCoup" id="Q9SB41">
    <property type="interactions" value="1428"/>
</dbReference>
<dbReference type="STRING" id="3702.Q9SB41"/>
<dbReference type="iPTMnet" id="Q9SB41"/>
<dbReference type="PaxDb" id="3702-AT4G25220.1"/>
<dbReference type="ProteomicsDB" id="247398"/>
<dbReference type="EnsemblPlants" id="AT4G25220.1">
    <property type="protein sequence ID" value="AT4G25220.1"/>
    <property type="gene ID" value="AT4G25220"/>
</dbReference>
<dbReference type="GeneID" id="828625"/>
<dbReference type="Gramene" id="AT4G25220.1">
    <property type="protein sequence ID" value="AT4G25220.1"/>
    <property type="gene ID" value="AT4G25220"/>
</dbReference>
<dbReference type="KEGG" id="ath:AT4G25220"/>
<dbReference type="Araport" id="AT4G25220"/>
<dbReference type="TAIR" id="AT4G25220">
    <property type="gene designation" value="G3PP2"/>
</dbReference>
<dbReference type="eggNOG" id="KOG2533">
    <property type="taxonomic scope" value="Eukaryota"/>
</dbReference>
<dbReference type="HOGENOM" id="CLU_001265_31_6_1"/>
<dbReference type="InParanoid" id="Q9SB41"/>
<dbReference type="OMA" id="VAFWADF"/>
<dbReference type="OrthoDB" id="3639251at2759"/>
<dbReference type="PhylomeDB" id="Q9SB41"/>
<dbReference type="BRENDA" id="7.6.2.10">
    <property type="organism ID" value="399"/>
</dbReference>
<dbReference type="PRO" id="PR:Q9SB41"/>
<dbReference type="Proteomes" id="UP000006548">
    <property type="component" value="Chromosome 4"/>
</dbReference>
<dbReference type="ExpressionAtlas" id="Q9SB41">
    <property type="expression patterns" value="baseline and differential"/>
</dbReference>
<dbReference type="GO" id="GO:0016020">
    <property type="term" value="C:membrane"/>
    <property type="evidence" value="ECO:0007669"/>
    <property type="project" value="UniProtKB-SubCell"/>
</dbReference>
<dbReference type="GO" id="GO:0022857">
    <property type="term" value="F:transmembrane transporter activity"/>
    <property type="evidence" value="ECO:0007669"/>
    <property type="project" value="InterPro"/>
</dbReference>
<dbReference type="GO" id="GO:0055062">
    <property type="term" value="P:phosphate ion homeostasis"/>
    <property type="evidence" value="ECO:0000270"/>
    <property type="project" value="TAIR"/>
</dbReference>
<dbReference type="FunFam" id="1.20.1250.20:FF:000050">
    <property type="entry name" value="glucose-6-phosphate exchanger SLC37A2 isoform X1"/>
    <property type="match status" value="1"/>
</dbReference>
<dbReference type="FunFam" id="1.20.1250.20:FF:000028">
    <property type="entry name" value="Sugar phosphate exchanger 3 isoform 1"/>
    <property type="match status" value="1"/>
</dbReference>
<dbReference type="Gene3D" id="1.20.1250.20">
    <property type="entry name" value="MFS general substrate transporter like domains"/>
    <property type="match status" value="2"/>
</dbReference>
<dbReference type="InterPro" id="IPR011701">
    <property type="entry name" value="MFS"/>
</dbReference>
<dbReference type="InterPro" id="IPR020846">
    <property type="entry name" value="MFS_dom"/>
</dbReference>
<dbReference type="InterPro" id="IPR036259">
    <property type="entry name" value="MFS_trans_sf"/>
</dbReference>
<dbReference type="InterPro" id="IPR000849">
    <property type="entry name" value="Sugar_P_transporter"/>
</dbReference>
<dbReference type="PANTHER" id="PTHR43184:SF17">
    <property type="entry name" value="GLYCEROL-3-PHOSPHATE TRANSPORTER 2-RELATED"/>
    <property type="match status" value="1"/>
</dbReference>
<dbReference type="PANTHER" id="PTHR43184">
    <property type="entry name" value="MAJOR FACILITATOR SUPERFAMILY TRANSPORTER 16, ISOFORM B"/>
    <property type="match status" value="1"/>
</dbReference>
<dbReference type="Pfam" id="PF07690">
    <property type="entry name" value="MFS_1"/>
    <property type="match status" value="1"/>
</dbReference>
<dbReference type="PIRSF" id="PIRSF002808">
    <property type="entry name" value="Hexose_phosphate_transp"/>
    <property type="match status" value="1"/>
</dbReference>
<dbReference type="SUPFAM" id="SSF103473">
    <property type="entry name" value="MFS general substrate transporter"/>
    <property type="match status" value="1"/>
</dbReference>
<dbReference type="PROSITE" id="PS50850">
    <property type="entry name" value="MFS"/>
    <property type="match status" value="1"/>
</dbReference>
<organism>
    <name type="scientific">Arabidopsis thaliana</name>
    <name type="common">Mouse-ear cress</name>
    <dbReference type="NCBI Taxonomy" id="3702"/>
    <lineage>
        <taxon>Eukaryota</taxon>
        <taxon>Viridiplantae</taxon>
        <taxon>Streptophyta</taxon>
        <taxon>Embryophyta</taxon>
        <taxon>Tracheophyta</taxon>
        <taxon>Spermatophyta</taxon>
        <taxon>Magnoliopsida</taxon>
        <taxon>eudicotyledons</taxon>
        <taxon>Gunneridae</taxon>
        <taxon>Pentapetalae</taxon>
        <taxon>rosids</taxon>
        <taxon>malvids</taxon>
        <taxon>Brassicales</taxon>
        <taxon>Brassicaceae</taxon>
        <taxon>Camelineae</taxon>
        <taxon>Arabidopsis</taxon>
    </lineage>
</organism>
<protein>
    <recommendedName>
        <fullName>Putative glycerol-3-phosphate transporter 2</fullName>
        <shortName>G-3-P transporter 2</shortName>
    </recommendedName>
    <alternativeName>
        <fullName>Glycerol-3-phosphate permease 2</fullName>
        <shortName>AtG3Pp2</shortName>
        <shortName>G-3-P permease 2</shortName>
    </alternativeName>
    <alternativeName>
        <fullName>Protein ROOT HAIR SPECIFIC 15</fullName>
        <shortName>AtRHS15</shortName>
    </alternativeName>
</protein>
<keyword id="KW-0472">Membrane</keyword>
<keyword id="KW-1185">Reference proteome</keyword>
<keyword id="KW-0762">Sugar transport</keyword>
<keyword id="KW-0812">Transmembrane</keyword>
<keyword id="KW-1133">Transmembrane helix</keyword>
<keyword id="KW-0813">Transport</keyword>
<evidence type="ECO:0000255" key="1"/>
<evidence type="ECO:0000269" key="2">
    <source>
    </source>
</evidence>
<evidence type="ECO:0000305" key="3"/>
<proteinExistence type="evidence at transcript level"/>
<reference key="1">
    <citation type="journal article" date="1999" name="Nature">
        <title>Sequence and analysis of chromosome 4 of the plant Arabidopsis thaliana.</title>
        <authorList>
            <person name="Mayer K.F.X."/>
            <person name="Schueller C."/>
            <person name="Wambutt R."/>
            <person name="Murphy G."/>
            <person name="Volckaert G."/>
            <person name="Pohl T."/>
            <person name="Duesterhoeft A."/>
            <person name="Stiekema W."/>
            <person name="Entian K.-D."/>
            <person name="Terryn N."/>
            <person name="Harris B."/>
            <person name="Ansorge W."/>
            <person name="Brandt P."/>
            <person name="Grivell L.A."/>
            <person name="Rieger M."/>
            <person name="Weichselgartner M."/>
            <person name="de Simone V."/>
            <person name="Obermaier B."/>
            <person name="Mache R."/>
            <person name="Mueller M."/>
            <person name="Kreis M."/>
            <person name="Delseny M."/>
            <person name="Puigdomenech P."/>
            <person name="Watson M."/>
            <person name="Schmidtheini T."/>
            <person name="Reichert B."/>
            <person name="Portetelle D."/>
            <person name="Perez-Alonso M."/>
            <person name="Boutry M."/>
            <person name="Bancroft I."/>
            <person name="Vos P."/>
            <person name="Hoheisel J."/>
            <person name="Zimmermann W."/>
            <person name="Wedler H."/>
            <person name="Ridley P."/>
            <person name="Langham S.-A."/>
            <person name="McCullagh B."/>
            <person name="Bilham L."/>
            <person name="Robben J."/>
            <person name="van der Schueren J."/>
            <person name="Grymonprez B."/>
            <person name="Chuang Y.-J."/>
            <person name="Vandenbussche F."/>
            <person name="Braeken M."/>
            <person name="Weltjens I."/>
            <person name="Voet M."/>
            <person name="Bastiaens I."/>
            <person name="Aert R."/>
            <person name="Defoor E."/>
            <person name="Weitzenegger T."/>
            <person name="Bothe G."/>
            <person name="Ramsperger U."/>
            <person name="Hilbert H."/>
            <person name="Braun M."/>
            <person name="Holzer E."/>
            <person name="Brandt A."/>
            <person name="Peters S."/>
            <person name="van Staveren M."/>
            <person name="Dirkse W."/>
            <person name="Mooijman P."/>
            <person name="Klein Lankhorst R."/>
            <person name="Rose M."/>
            <person name="Hauf J."/>
            <person name="Koetter P."/>
            <person name="Berneiser S."/>
            <person name="Hempel S."/>
            <person name="Feldpausch M."/>
            <person name="Lamberth S."/>
            <person name="Van den Daele H."/>
            <person name="De Keyser A."/>
            <person name="Buysshaert C."/>
            <person name="Gielen J."/>
            <person name="Villarroel R."/>
            <person name="De Clercq R."/>
            <person name="van Montagu M."/>
            <person name="Rogers J."/>
            <person name="Cronin A."/>
            <person name="Quail M.A."/>
            <person name="Bray-Allen S."/>
            <person name="Clark L."/>
            <person name="Doggett J."/>
            <person name="Hall S."/>
            <person name="Kay M."/>
            <person name="Lennard N."/>
            <person name="McLay K."/>
            <person name="Mayes R."/>
            <person name="Pettett A."/>
            <person name="Rajandream M.A."/>
            <person name="Lyne M."/>
            <person name="Benes V."/>
            <person name="Rechmann S."/>
            <person name="Borkova D."/>
            <person name="Bloecker H."/>
            <person name="Scharfe M."/>
            <person name="Grimm M."/>
            <person name="Loehnert T.-H."/>
            <person name="Dose S."/>
            <person name="de Haan M."/>
            <person name="Maarse A.C."/>
            <person name="Schaefer M."/>
            <person name="Mueller-Auer S."/>
            <person name="Gabel C."/>
            <person name="Fuchs M."/>
            <person name="Fartmann B."/>
            <person name="Granderath K."/>
            <person name="Dauner D."/>
            <person name="Herzl A."/>
            <person name="Neumann S."/>
            <person name="Argiriou A."/>
            <person name="Vitale D."/>
            <person name="Liguori R."/>
            <person name="Piravandi E."/>
            <person name="Massenet O."/>
            <person name="Quigley F."/>
            <person name="Clabauld G."/>
            <person name="Muendlein A."/>
            <person name="Felber R."/>
            <person name="Schnabl S."/>
            <person name="Hiller R."/>
            <person name="Schmidt W."/>
            <person name="Lecharny A."/>
            <person name="Aubourg S."/>
            <person name="Chefdor F."/>
            <person name="Cooke R."/>
            <person name="Berger C."/>
            <person name="Monfort A."/>
            <person name="Casacuberta E."/>
            <person name="Gibbons T."/>
            <person name="Weber N."/>
            <person name="Vandenbol M."/>
            <person name="Bargues M."/>
            <person name="Terol J."/>
            <person name="Torres A."/>
            <person name="Perez-Perez A."/>
            <person name="Purnelle B."/>
            <person name="Bent E."/>
            <person name="Johnson S."/>
            <person name="Tacon D."/>
            <person name="Jesse T."/>
            <person name="Heijnen L."/>
            <person name="Schwarz S."/>
            <person name="Scholler P."/>
            <person name="Heber S."/>
            <person name="Francs P."/>
            <person name="Bielke C."/>
            <person name="Frishman D."/>
            <person name="Haase D."/>
            <person name="Lemcke K."/>
            <person name="Mewes H.-W."/>
            <person name="Stocker S."/>
            <person name="Zaccaria P."/>
            <person name="Bevan M."/>
            <person name="Wilson R.K."/>
            <person name="de la Bastide M."/>
            <person name="Habermann K."/>
            <person name="Parnell L."/>
            <person name="Dedhia N."/>
            <person name="Gnoj L."/>
            <person name="Schutz K."/>
            <person name="Huang E."/>
            <person name="Spiegel L."/>
            <person name="Sekhon M."/>
            <person name="Murray J."/>
            <person name="Sheet P."/>
            <person name="Cordes M."/>
            <person name="Abu-Threideh J."/>
            <person name="Stoneking T."/>
            <person name="Kalicki J."/>
            <person name="Graves T."/>
            <person name="Harmon G."/>
            <person name="Edwards J."/>
            <person name="Latreille P."/>
            <person name="Courtney L."/>
            <person name="Cloud J."/>
            <person name="Abbott A."/>
            <person name="Scott K."/>
            <person name="Johnson D."/>
            <person name="Minx P."/>
            <person name="Bentley D."/>
            <person name="Fulton B."/>
            <person name="Miller N."/>
            <person name="Greco T."/>
            <person name="Kemp K."/>
            <person name="Kramer J."/>
            <person name="Fulton L."/>
            <person name="Mardis E."/>
            <person name="Dante M."/>
            <person name="Pepin K."/>
            <person name="Hillier L.W."/>
            <person name="Nelson J."/>
            <person name="Spieth J."/>
            <person name="Ryan E."/>
            <person name="Andrews S."/>
            <person name="Geisel C."/>
            <person name="Layman D."/>
            <person name="Du H."/>
            <person name="Ali J."/>
            <person name="Berghoff A."/>
            <person name="Jones K."/>
            <person name="Drone K."/>
            <person name="Cotton M."/>
            <person name="Joshu C."/>
            <person name="Antonoiu B."/>
            <person name="Zidanic M."/>
            <person name="Strong C."/>
            <person name="Sun H."/>
            <person name="Lamar B."/>
            <person name="Yordan C."/>
            <person name="Ma P."/>
            <person name="Zhong J."/>
            <person name="Preston R."/>
            <person name="Vil D."/>
            <person name="Shekher M."/>
            <person name="Matero A."/>
            <person name="Shah R."/>
            <person name="Swaby I.K."/>
            <person name="O'Shaughnessy A."/>
            <person name="Rodriguez M."/>
            <person name="Hoffman J."/>
            <person name="Till S."/>
            <person name="Granat S."/>
            <person name="Shohdy N."/>
            <person name="Hasegawa A."/>
            <person name="Hameed A."/>
            <person name="Lodhi M."/>
            <person name="Johnson A."/>
            <person name="Chen E."/>
            <person name="Marra M.A."/>
            <person name="Martienssen R."/>
            <person name="McCombie W.R."/>
        </authorList>
    </citation>
    <scope>NUCLEOTIDE SEQUENCE [LARGE SCALE GENOMIC DNA]</scope>
    <source>
        <strain>cv. Columbia</strain>
    </source>
</reference>
<reference key="2">
    <citation type="journal article" date="2017" name="Plant J.">
        <title>Araport11: a complete reannotation of the Arabidopsis thaliana reference genome.</title>
        <authorList>
            <person name="Cheng C.Y."/>
            <person name="Krishnakumar V."/>
            <person name="Chan A.P."/>
            <person name="Thibaud-Nissen F."/>
            <person name="Schobel S."/>
            <person name="Town C.D."/>
        </authorList>
    </citation>
    <scope>GENOME REANNOTATION</scope>
    <source>
        <strain>cv. Columbia</strain>
    </source>
</reference>
<reference key="3">
    <citation type="journal article" date="2004" name="Genome Res.">
        <title>Whole genome sequence comparisons and 'full-length' cDNA sequences: a combined approach to evaluate and improve Arabidopsis genome annotation.</title>
        <authorList>
            <person name="Castelli V."/>
            <person name="Aury J.-M."/>
            <person name="Jaillon O."/>
            <person name="Wincker P."/>
            <person name="Clepet C."/>
            <person name="Menard M."/>
            <person name="Cruaud C."/>
            <person name="Quetier F."/>
            <person name="Scarpelli C."/>
            <person name="Schaechter V."/>
            <person name="Temple G."/>
            <person name="Caboche M."/>
            <person name="Weissenbach J."/>
            <person name="Salanoubat M."/>
        </authorList>
    </citation>
    <scope>NUCLEOTIDE SEQUENCE [LARGE SCALE MRNA]</scope>
    <source>
        <strain>cv. Columbia</strain>
    </source>
</reference>
<reference key="4">
    <citation type="journal article" date="2006" name="Plant J.">
        <title>Analysis of the root-hair morphogenesis transcriptome reveals the molecular identity of six genes with roles in root-hair development in Arabidopsis.</title>
        <authorList>
            <person name="Jones M.A."/>
            <person name="Raymond M.J."/>
            <person name="Smirnoff N."/>
        </authorList>
    </citation>
    <scope>TISSUE SPECIFICITY</scope>
</reference>
<name>GLPT2_ARATH</name>
<feature type="chain" id="PRO_0000403113" description="Putative glycerol-3-phosphate transporter 2">
    <location>
        <begin position="1"/>
        <end position="504"/>
    </location>
</feature>
<feature type="transmembrane region" description="Helical" evidence="1">
    <location>
        <begin position="31"/>
        <end position="51"/>
    </location>
</feature>
<feature type="transmembrane region" description="Helical" evidence="1">
    <location>
        <begin position="84"/>
        <end position="104"/>
    </location>
</feature>
<feature type="transmembrane region" description="Helical" evidence="1">
    <location>
        <begin position="116"/>
        <end position="136"/>
    </location>
</feature>
<feature type="transmembrane region" description="Helical" evidence="1">
    <location>
        <begin position="145"/>
        <end position="165"/>
    </location>
</feature>
<feature type="transmembrane region" description="Helical" evidence="1">
    <location>
        <begin position="178"/>
        <end position="198"/>
    </location>
</feature>
<feature type="transmembrane region" description="Helical" evidence="1">
    <location>
        <begin position="210"/>
        <end position="230"/>
    </location>
</feature>
<feature type="transmembrane region" description="Helical" evidence="1">
    <location>
        <begin position="280"/>
        <end position="302"/>
    </location>
</feature>
<feature type="transmembrane region" description="Helical" evidence="1">
    <location>
        <begin position="324"/>
        <end position="344"/>
    </location>
</feature>
<feature type="transmembrane region" description="Helical" evidence="1">
    <location>
        <begin position="352"/>
        <end position="372"/>
    </location>
</feature>
<feature type="transmembrane region" description="Helical" evidence="1">
    <location>
        <begin position="378"/>
        <end position="398"/>
    </location>
</feature>
<feature type="transmembrane region" description="Helical" evidence="1">
    <location>
        <begin position="424"/>
        <end position="444"/>
    </location>
</feature>
<feature type="transmembrane region" description="Helical" evidence="1">
    <location>
        <begin position="452"/>
        <end position="472"/>
    </location>
</feature>
<feature type="sequence conflict" description="In Ref. 3; BX828025." evidence="3" ref="3">
    <original>K</original>
    <variation>T</variation>
    <location>
        <position position="413"/>
    </location>
</feature>
<accession>Q9SB41</accession>
<gene>
    <name type="ordered locus">At4g25220</name>
    <name type="ORF">F24A6.60</name>
</gene>
<sequence length="504" mass="54376">MASWTSSQFLYEETKPWGIQFLEKFKRSGRLSFKQYQALVFILTFVAYIAFHAARKPNSIVKGTLSASTIEGGWAPFDGPDGTALLGQIDLAFLSVYAVGMFVAGHLGDRLDLRTFLTIGMIGTGLFTALFGVAFWANFHSFYYFLAVQVMAGLFQSIGWPCIVAVLGNWFDKKRRGMIMGVWSAHTSLGNIAGSLIASGLLRYGWGWSFLGPAFLMTFLGIVVYLFLPVNPPTVEAERDGTEIDSTMRLGDTITESLLESRMSTGFDRKAVGFMAAWKIPGVAPFAFCLFFTKLVSYTFLYWLPFYVSHNMIGGEYLSEETSGNLSTIFDVGGVVGGVLAGYISDQLNGRAITAAGFMYLAIPALFLYRVFGHISLTINVILMFTSGVFIIGPFALITTAVSADLGTHKSLKGNARALATVSAIIDGTGSVGAAIGPVLTGYISAISWDAVFYMLMTAALISGLLLTKLIIAEVKALLFGSEDEVAASSSSPPASRPPIDVLV</sequence>